<name>RUVB_BURO1</name>
<reference key="1">
    <citation type="submission" date="2006-05" db="EMBL/GenBank/DDBJ databases">
        <title>Complete sequence of chromosome 1 of Burkholderia cenocepacia AU 1054.</title>
        <authorList>
            <consortium name="US DOE Joint Genome Institute"/>
            <person name="Copeland A."/>
            <person name="Lucas S."/>
            <person name="Lapidus A."/>
            <person name="Barry K."/>
            <person name="Detter J.C."/>
            <person name="Glavina del Rio T."/>
            <person name="Hammon N."/>
            <person name="Israni S."/>
            <person name="Dalin E."/>
            <person name="Tice H."/>
            <person name="Pitluck S."/>
            <person name="Chain P."/>
            <person name="Malfatti S."/>
            <person name="Shin M."/>
            <person name="Vergez L."/>
            <person name="Schmutz J."/>
            <person name="Larimer F."/>
            <person name="Land M."/>
            <person name="Hauser L."/>
            <person name="Kyrpides N."/>
            <person name="Lykidis A."/>
            <person name="LiPuma J.J."/>
            <person name="Konstantinidis K."/>
            <person name="Tiedje J.M."/>
            <person name="Richardson P."/>
        </authorList>
    </citation>
    <scope>NUCLEOTIDE SEQUENCE [LARGE SCALE GENOMIC DNA]</scope>
    <source>
        <strain>AU 1054</strain>
    </source>
</reference>
<organism>
    <name type="scientific">Burkholderia orbicola (strain AU 1054)</name>
    <dbReference type="NCBI Taxonomy" id="331271"/>
    <lineage>
        <taxon>Bacteria</taxon>
        <taxon>Pseudomonadati</taxon>
        <taxon>Pseudomonadota</taxon>
        <taxon>Betaproteobacteria</taxon>
        <taxon>Burkholderiales</taxon>
        <taxon>Burkholderiaceae</taxon>
        <taxon>Burkholderia</taxon>
        <taxon>Burkholderia cepacia complex</taxon>
        <taxon>Burkholderia orbicola</taxon>
    </lineage>
</organism>
<keyword id="KW-0067">ATP-binding</keyword>
<keyword id="KW-0963">Cytoplasm</keyword>
<keyword id="KW-0227">DNA damage</keyword>
<keyword id="KW-0233">DNA recombination</keyword>
<keyword id="KW-0234">DNA repair</keyword>
<keyword id="KW-0238">DNA-binding</keyword>
<keyword id="KW-0378">Hydrolase</keyword>
<keyword id="KW-0547">Nucleotide-binding</keyword>
<protein>
    <recommendedName>
        <fullName evidence="1">Holliday junction branch migration complex subunit RuvB</fullName>
        <ecNumber evidence="1">3.6.4.-</ecNumber>
    </recommendedName>
</protein>
<gene>
    <name evidence="1" type="primary">ruvB</name>
    <name type="ordered locus">Bcen_0205</name>
</gene>
<comment type="function">
    <text evidence="1">The RuvA-RuvB-RuvC complex processes Holliday junction (HJ) DNA during genetic recombination and DNA repair, while the RuvA-RuvB complex plays an important role in the rescue of blocked DNA replication forks via replication fork reversal (RFR). RuvA specifically binds to HJ cruciform DNA, conferring on it an open structure. The RuvB hexamer acts as an ATP-dependent pump, pulling dsDNA into and through the RuvAB complex. RuvB forms 2 homohexamers on either side of HJ DNA bound by 1 or 2 RuvA tetramers; 4 subunits per hexamer contact DNA at a time. Coordinated motions by a converter formed by DNA-disengaged RuvB subunits stimulates ATP hydrolysis and nucleotide exchange. Immobilization of the converter enables RuvB to convert the ATP-contained energy into a lever motion, pulling 2 nucleotides of DNA out of the RuvA tetramer per ATP hydrolyzed, thus driving DNA branch migration. The RuvB motors rotate together with the DNA substrate, which together with the progressing nucleotide cycle form the mechanistic basis for DNA recombination by continuous HJ branch migration. Branch migration allows RuvC to scan DNA until it finds its consensus sequence, where it cleaves and resolves cruciform DNA.</text>
</comment>
<comment type="catalytic activity">
    <reaction evidence="1">
        <text>ATP + H2O = ADP + phosphate + H(+)</text>
        <dbReference type="Rhea" id="RHEA:13065"/>
        <dbReference type="ChEBI" id="CHEBI:15377"/>
        <dbReference type="ChEBI" id="CHEBI:15378"/>
        <dbReference type="ChEBI" id="CHEBI:30616"/>
        <dbReference type="ChEBI" id="CHEBI:43474"/>
        <dbReference type="ChEBI" id="CHEBI:456216"/>
    </reaction>
</comment>
<comment type="subunit">
    <text evidence="1">Homohexamer. Forms an RuvA(8)-RuvB(12)-Holliday junction (HJ) complex. HJ DNA is sandwiched between 2 RuvA tetramers; dsDNA enters through RuvA and exits via RuvB. An RuvB hexamer assembles on each DNA strand where it exits the tetramer. Each RuvB hexamer is contacted by two RuvA subunits (via domain III) on 2 adjacent RuvB subunits; this complex drives branch migration. In the full resolvosome a probable DNA-RuvA(4)-RuvB(12)-RuvC(2) complex forms which resolves the HJ.</text>
</comment>
<comment type="subcellular location">
    <subcellularLocation>
        <location evidence="1">Cytoplasm</location>
    </subcellularLocation>
</comment>
<comment type="domain">
    <text evidence="1">Has 3 domains, the large (RuvB-L) and small ATPase (RuvB-S) domains and the C-terminal head (RuvB-H) domain. The head domain binds DNA, while the ATPase domains jointly bind ATP, ADP or are empty depending on the state of the subunit in the translocation cycle. During a single DNA translocation step the structure of each domain remains the same, but their relative positions change.</text>
</comment>
<comment type="similarity">
    <text evidence="1">Belongs to the RuvB family.</text>
</comment>
<evidence type="ECO:0000255" key="1">
    <source>
        <dbReference type="HAMAP-Rule" id="MF_00016"/>
    </source>
</evidence>
<sequence>MIETDKLATEQRIIAATPASSHEEVFERALRPRQLDDYVGQEKVRGQLEIFIEAAKRRSEPLDHVLLFGPPGLGKTTLAHIIAREMGVNLRQTSGPVLERAGDLAALLTNLEANDVLFIDEIHRLSPVVEEILYPALEDYQIDIMIGEGPAARSVKLDLQPFTLVGATTRAGMLTNPLRDRFGIVARLEFYDAEQLSRIVRRSASLLNAQIDPNGALEIAKRARGTPRIANRLLRRVRDFAEVKADGQITAAVADAALAMLDVDPVGFDLMDRKLLEAILYKFDGGPVGIDNLAAAIGEERDTIEDVLEPYLIQQGFLQRTPRGRVATLLTYRHFGLSVPDARRTERDEWDTPDGK</sequence>
<feature type="chain" id="PRO_1000001368" description="Holliday junction branch migration complex subunit RuvB">
    <location>
        <begin position="1"/>
        <end position="356"/>
    </location>
</feature>
<feature type="region of interest" description="Large ATPase domain (RuvB-L)" evidence="1">
    <location>
        <begin position="4"/>
        <end position="191"/>
    </location>
</feature>
<feature type="region of interest" description="Small ATPAse domain (RuvB-S)" evidence="1">
    <location>
        <begin position="192"/>
        <end position="262"/>
    </location>
</feature>
<feature type="region of interest" description="Head domain (RuvB-H)" evidence="1">
    <location>
        <begin position="265"/>
        <end position="356"/>
    </location>
</feature>
<feature type="binding site" evidence="1">
    <location>
        <position position="30"/>
    </location>
    <ligand>
        <name>ATP</name>
        <dbReference type="ChEBI" id="CHEBI:30616"/>
    </ligand>
</feature>
<feature type="binding site" evidence="1">
    <location>
        <position position="31"/>
    </location>
    <ligand>
        <name>ATP</name>
        <dbReference type="ChEBI" id="CHEBI:30616"/>
    </ligand>
</feature>
<feature type="binding site" evidence="1">
    <location>
        <position position="72"/>
    </location>
    <ligand>
        <name>ATP</name>
        <dbReference type="ChEBI" id="CHEBI:30616"/>
    </ligand>
</feature>
<feature type="binding site" evidence="1">
    <location>
        <position position="75"/>
    </location>
    <ligand>
        <name>ATP</name>
        <dbReference type="ChEBI" id="CHEBI:30616"/>
    </ligand>
</feature>
<feature type="binding site" evidence="1">
    <location>
        <position position="76"/>
    </location>
    <ligand>
        <name>ATP</name>
        <dbReference type="ChEBI" id="CHEBI:30616"/>
    </ligand>
</feature>
<feature type="binding site" evidence="1">
    <location>
        <position position="76"/>
    </location>
    <ligand>
        <name>Mg(2+)</name>
        <dbReference type="ChEBI" id="CHEBI:18420"/>
    </ligand>
</feature>
<feature type="binding site" evidence="1">
    <location>
        <position position="77"/>
    </location>
    <ligand>
        <name>ATP</name>
        <dbReference type="ChEBI" id="CHEBI:30616"/>
    </ligand>
</feature>
<feature type="binding site" evidence="1">
    <location>
        <begin position="138"/>
        <end position="140"/>
    </location>
    <ligand>
        <name>ATP</name>
        <dbReference type="ChEBI" id="CHEBI:30616"/>
    </ligand>
</feature>
<feature type="binding site" evidence="1">
    <location>
        <position position="181"/>
    </location>
    <ligand>
        <name>ATP</name>
        <dbReference type="ChEBI" id="CHEBI:30616"/>
    </ligand>
</feature>
<feature type="binding site" evidence="1">
    <location>
        <position position="191"/>
    </location>
    <ligand>
        <name>ATP</name>
        <dbReference type="ChEBI" id="CHEBI:30616"/>
    </ligand>
</feature>
<feature type="binding site" evidence="1">
    <location>
        <position position="228"/>
    </location>
    <ligand>
        <name>ATP</name>
        <dbReference type="ChEBI" id="CHEBI:30616"/>
    </ligand>
</feature>
<feature type="binding site" evidence="1">
    <location>
        <position position="301"/>
    </location>
    <ligand>
        <name>DNA</name>
        <dbReference type="ChEBI" id="CHEBI:16991"/>
    </ligand>
</feature>
<feature type="binding site" evidence="1">
    <location>
        <position position="320"/>
    </location>
    <ligand>
        <name>DNA</name>
        <dbReference type="ChEBI" id="CHEBI:16991"/>
    </ligand>
</feature>
<feature type="binding site" evidence="1">
    <location>
        <position position="325"/>
    </location>
    <ligand>
        <name>DNA</name>
        <dbReference type="ChEBI" id="CHEBI:16991"/>
    </ligand>
</feature>
<proteinExistence type="inferred from homology"/>
<dbReference type="EC" id="3.6.4.-" evidence="1"/>
<dbReference type="EMBL" id="CP000378">
    <property type="protein sequence ID" value="ABF75119.1"/>
    <property type="molecule type" value="Genomic_DNA"/>
</dbReference>
<dbReference type="SMR" id="Q1BZ36"/>
<dbReference type="HOGENOM" id="CLU_055599_1_0_4"/>
<dbReference type="GO" id="GO:0005737">
    <property type="term" value="C:cytoplasm"/>
    <property type="evidence" value="ECO:0007669"/>
    <property type="project" value="UniProtKB-SubCell"/>
</dbReference>
<dbReference type="GO" id="GO:0048476">
    <property type="term" value="C:Holliday junction resolvase complex"/>
    <property type="evidence" value="ECO:0007669"/>
    <property type="project" value="UniProtKB-UniRule"/>
</dbReference>
<dbReference type="GO" id="GO:0005524">
    <property type="term" value="F:ATP binding"/>
    <property type="evidence" value="ECO:0007669"/>
    <property type="project" value="UniProtKB-UniRule"/>
</dbReference>
<dbReference type="GO" id="GO:0016887">
    <property type="term" value="F:ATP hydrolysis activity"/>
    <property type="evidence" value="ECO:0007669"/>
    <property type="project" value="InterPro"/>
</dbReference>
<dbReference type="GO" id="GO:0000400">
    <property type="term" value="F:four-way junction DNA binding"/>
    <property type="evidence" value="ECO:0007669"/>
    <property type="project" value="UniProtKB-UniRule"/>
</dbReference>
<dbReference type="GO" id="GO:0009378">
    <property type="term" value="F:four-way junction helicase activity"/>
    <property type="evidence" value="ECO:0007669"/>
    <property type="project" value="InterPro"/>
</dbReference>
<dbReference type="GO" id="GO:0006310">
    <property type="term" value="P:DNA recombination"/>
    <property type="evidence" value="ECO:0007669"/>
    <property type="project" value="UniProtKB-UniRule"/>
</dbReference>
<dbReference type="GO" id="GO:0006281">
    <property type="term" value="P:DNA repair"/>
    <property type="evidence" value="ECO:0007669"/>
    <property type="project" value="UniProtKB-UniRule"/>
</dbReference>
<dbReference type="CDD" id="cd00009">
    <property type="entry name" value="AAA"/>
    <property type="match status" value="1"/>
</dbReference>
<dbReference type="FunFam" id="1.10.10.10:FF:000086">
    <property type="entry name" value="Holliday junction ATP-dependent DNA helicase RuvB"/>
    <property type="match status" value="1"/>
</dbReference>
<dbReference type="FunFam" id="1.10.8.60:FF:000023">
    <property type="entry name" value="Holliday junction ATP-dependent DNA helicase RuvB"/>
    <property type="match status" value="1"/>
</dbReference>
<dbReference type="FunFam" id="3.40.50.300:FF:000073">
    <property type="entry name" value="Holliday junction ATP-dependent DNA helicase RuvB"/>
    <property type="match status" value="1"/>
</dbReference>
<dbReference type="Gene3D" id="1.10.8.60">
    <property type="match status" value="1"/>
</dbReference>
<dbReference type="Gene3D" id="3.40.50.300">
    <property type="entry name" value="P-loop containing nucleotide triphosphate hydrolases"/>
    <property type="match status" value="1"/>
</dbReference>
<dbReference type="Gene3D" id="1.10.10.10">
    <property type="entry name" value="Winged helix-like DNA-binding domain superfamily/Winged helix DNA-binding domain"/>
    <property type="match status" value="1"/>
</dbReference>
<dbReference type="HAMAP" id="MF_00016">
    <property type="entry name" value="DNA_HJ_migration_RuvB"/>
    <property type="match status" value="1"/>
</dbReference>
<dbReference type="InterPro" id="IPR003593">
    <property type="entry name" value="AAA+_ATPase"/>
</dbReference>
<dbReference type="InterPro" id="IPR041445">
    <property type="entry name" value="AAA_lid_4"/>
</dbReference>
<dbReference type="InterPro" id="IPR004605">
    <property type="entry name" value="DNA_helicase_Holl-junc_RuvB"/>
</dbReference>
<dbReference type="InterPro" id="IPR027417">
    <property type="entry name" value="P-loop_NTPase"/>
</dbReference>
<dbReference type="InterPro" id="IPR008824">
    <property type="entry name" value="RuvB-like_N"/>
</dbReference>
<dbReference type="InterPro" id="IPR008823">
    <property type="entry name" value="RuvB_C"/>
</dbReference>
<dbReference type="InterPro" id="IPR036388">
    <property type="entry name" value="WH-like_DNA-bd_sf"/>
</dbReference>
<dbReference type="InterPro" id="IPR036390">
    <property type="entry name" value="WH_DNA-bd_sf"/>
</dbReference>
<dbReference type="NCBIfam" id="NF000868">
    <property type="entry name" value="PRK00080.1"/>
    <property type="match status" value="1"/>
</dbReference>
<dbReference type="NCBIfam" id="TIGR00635">
    <property type="entry name" value="ruvB"/>
    <property type="match status" value="1"/>
</dbReference>
<dbReference type="PANTHER" id="PTHR42848">
    <property type="match status" value="1"/>
</dbReference>
<dbReference type="PANTHER" id="PTHR42848:SF1">
    <property type="entry name" value="HOLLIDAY JUNCTION BRANCH MIGRATION COMPLEX SUBUNIT RUVB"/>
    <property type="match status" value="1"/>
</dbReference>
<dbReference type="Pfam" id="PF17864">
    <property type="entry name" value="AAA_lid_4"/>
    <property type="match status" value="1"/>
</dbReference>
<dbReference type="Pfam" id="PF05491">
    <property type="entry name" value="RuvB_C"/>
    <property type="match status" value="1"/>
</dbReference>
<dbReference type="Pfam" id="PF05496">
    <property type="entry name" value="RuvB_N"/>
    <property type="match status" value="1"/>
</dbReference>
<dbReference type="SMART" id="SM00382">
    <property type="entry name" value="AAA"/>
    <property type="match status" value="1"/>
</dbReference>
<dbReference type="SUPFAM" id="SSF52540">
    <property type="entry name" value="P-loop containing nucleoside triphosphate hydrolases"/>
    <property type="match status" value="1"/>
</dbReference>
<dbReference type="SUPFAM" id="SSF46785">
    <property type="entry name" value="Winged helix' DNA-binding domain"/>
    <property type="match status" value="1"/>
</dbReference>
<accession>Q1BZ36</accession>